<sequence length="510" mass="56573">MIWHVQNENLILDSTRIFMKAFHLPLFDGSFIFPEGILIFGLILLLMIDSTSDQTDIPWFYFISSISLVMSITALLFRWREEPRILFSGNFQTNNFNEIFQFLILLCSTLCIPLSVEYIECTEMAITEFLLFVLTATLGGMFLCGANDLITIFVAPECFSLCSYLLSGYTKKDVRSNEATMKYLLMGGASSSILVHGFSWLYGSSGGEIELQEIVNGLINTQMYNSPGISIALIFITVGIGFKLSPAPSHQWTPDVYEGSPTPVVAFLSVTSKVAASASATRIFDIPFYFSSNEWHPLLEILAILSMILGNLIAITQTSMKRMLAYSSIGQIGYVIIGIIVGDANGGYASMITYMLFYISMNLGTFACIVLFGLRTGTDNIRDYAGLYTKDPFLALSLALCLLSLGGLPPLAGFFGKLHLFWCGWQAGLYFLVSIGLFTSVVSIYYYLKIIKLLMTGRKQEITPHVRNYRRSPLRSNNSIELSMIVCVIASTIPGISMNPIIAIAQDTLF</sequence>
<keyword id="KW-0150">Chloroplast</keyword>
<keyword id="KW-0472">Membrane</keyword>
<keyword id="KW-0520">NAD</keyword>
<keyword id="KW-0521">NADP</keyword>
<keyword id="KW-0934">Plastid</keyword>
<keyword id="KW-0618">Plastoquinone</keyword>
<keyword id="KW-0874">Quinone</keyword>
<keyword id="KW-0793">Thylakoid</keyword>
<keyword id="KW-1278">Translocase</keyword>
<keyword id="KW-0812">Transmembrane</keyword>
<keyword id="KW-1133">Transmembrane helix</keyword>
<keyword id="KW-0813">Transport</keyword>
<organism>
    <name type="scientific">Oenothera parviflora</name>
    <name type="common">Small-flowered evening primrose</name>
    <name type="synonym">Oenothera cruciata</name>
    <dbReference type="NCBI Taxonomy" id="482429"/>
    <lineage>
        <taxon>Eukaryota</taxon>
        <taxon>Viridiplantae</taxon>
        <taxon>Streptophyta</taxon>
        <taxon>Embryophyta</taxon>
        <taxon>Tracheophyta</taxon>
        <taxon>Spermatophyta</taxon>
        <taxon>Magnoliopsida</taxon>
        <taxon>eudicotyledons</taxon>
        <taxon>Gunneridae</taxon>
        <taxon>Pentapetalae</taxon>
        <taxon>rosids</taxon>
        <taxon>malvids</taxon>
        <taxon>Myrtales</taxon>
        <taxon>Onagraceae</taxon>
        <taxon>Onagroideae</taxon>
        <taxon>Onagreae</taxon>
        <taxon>Oenothera</taxon>
    </lineage>
</organism>
<gene>
    <name evidence="1" type="primary">ndhB2</name>
</gene>
<reference key="1">
    <citation type="journal article" date="2008" name="Nucleic Acids Res.">
        <title>The complete nucleotide sequences of the five genetically distinct plastid genomes of Oenothera, subsection Oenothera: I. Sequence evaluation and plastome evolution.</title>
        <authorList>
            <person name="Greiner S."/>
            <person name="Wang X."/>
            <person name="Rauwolf U."/>
            <person name="Silber M.V."/>
            <person name="Mayer K."/>
            <person name="Meurer J."/>
            <person name="Haberer G."/>
            <person name="Herrmann R.G."/>
        </authorList>
    </citation>
    <scope>NUCLEOTIDE SEQUENCE [LARGE SCALE GENOMIC DNA]</scope>
    <source>
        <strain>cv. Atrovirens</strain>
    </source>
</reference>
<proteinExistence type="inferred from homology"/>
<dbReference type="EC" id="7.1.1.-" evidence="1"/>
<dbReference type="EMBL" id="EU262891">
    <property type="protein sequence ID" value="ABX10180.1"/>
    <property type="molecule type" value="Genomic_DNA"/>
</dbReference>
<dbReference type="SMR" id="P0CD15"/>
<dbReference type="GO" id="GO:0009535">
    <property type="term" value="C:chloroplast thylakoid membrane"/>
    <property type="evidence" value="ECO:0007669"/>
    <property type="project" value="UniProtKB-SubCell"/>
</dbReference>
<dbReference type="GO" id="GO:0008137">
    <property type="term" value="F:NADH dehydrogenase (ubiquinone) activity"/>
    <property type="evidence" value="ECO:0007669"/>
    <property type="project" value="InterPro"/>
</dbReference>
<dbReference type="GO" id="GO:0048038">
    <property type="term" value="F:quinone binding"/>
    <property type="evidence" value="ECO:0007669"/>
    <property type="project" value="UniProtKB-KW"/>
</dbReference>
<dbReference type="GO" id="GO:0042773">
    <property type="term" value="P:ATP synthesis coupled electron transport"/>
    <property type="evidence" value="ECO:0007669"/>
    <property type="project" value="InterPro"/>
</dbReference>
<dbReference type="GO" id="GO:0019684">
    <property type="term" value="P:photosynthesis, light reaction"/>
    <property type="evidence" value="ECO:0007669"/>
    <property type="project" value="UniProtKB-UniRule"/>
</dbReference>
<dbReference type="HAMAP" id="MF_00445">
    <property type="entry name" value="NDH1_NuoN_1"/>
    <property type="match status" value="1"/>
</dbReference>
<dbReference type="InterPro" id="IPR010096">
    <property type="entry name" value="NADH-Q_OxRdtase_suN/2"/>
</dbReference>
<dbReference type="InterPro" id="IPR001750">
    <property type="entry name" value="ND/Mrp_TM"/>
</dbReference>
<dbReference type="InterPro" id="IPR045693">
    <property type="entry name" value="Ndh2_N"/>
</dbReference>
<dbReference type="NCBIfam" id="TIGR01770">
    <property type="entry name" value="NDH_I_N"/>
    <property type="match status" value="1"/>
</dbReference>
<dbReference type="NCBIfam" id="NF002701">
    <property type="entry name" value="PRK02504.1"/>
    <property type="match status" value="1"/>
</dbReference>
<dbReference type="PANTHER" id="PTHR22773">
    <property type="entry name" value="NADH DEHYDROGENASE"/>
    <property type="match status" value="1"/>
</dbReference>
<dbReference type="Pfam" id="PF19530">
    <property type="entry name" value="Ndh2_N"/>
    <property type="match status" value="1"/>
</dbReference>
<dbReference type="Pfam" id="PF00361">
    <property type="entry name" value="Proton_antipo_M"/>
    <property type="match status" value="1"/>
</dbReference>
<protein>
    <recommendedName>
        <fullName evidence="1">NAD(P)H-quinone oxidoreductase subunit 2 B, chloroplastic</fullName>
        <ecNumber evidence="1">7.1.1.-</ecNumber>
    </recommendedName>
    <alternativeName>
        <fullName evidence="1">NAD(P)H dehydrogenase, subunit 2 B</fullName>
    </alternativeName>
    <alternativeName>
        <fullName evidence="1">NADH-plastoquinone oxidoreductase subunit 2 B</fullName>
    </alternativeName>
</protein>
<comment type="function">
    <text evidence="1">NDH shuttles electrons from NAD(P)H:plastoquinone, via FMN and iron-sulfur (Fe-S) centers, to quinones in the photosynthetic chain and possibly in a chloroplast respiratory chain. The immediate electron acceptor for the enzyme in this species is believed to be plastoquinone. Couples the redox reaction to proton translocation, and thus conserves the redox energy in a proton gradient.</text>
</comment>
<comment type="catalytic activity">
    <reaction evidence="1">
        <text>a plastoquinone + NADH + (n+1) H(+)(in) = a plastoquinol + NAD(+) + n H(+)(out)</text>
        <dbReference type="Rhea" id="RHEA:42608"/>
        <dbReference type="Rhea" id="RHEA-COMP:9561"/>
        <dbReference type="Rhea" id="RHEA-COMP:9562"/>
        <dbReference type="ChEBI" id="CHEBI:15378"/>
        <dbReference type="ChEBI" id="CHEBI:17757"/>
        <dbReference type="ChEBI" id="CHEBI:57540"/>
        <dbReference type="ChEBI" id="CHEBI:57945"/>
        <dbReference type="ChEBI" id="CHEBI:62192"/>
    </reaction>
</comment>
<comment type="catalytic activity">
    <reaction evidence="1">
        <text>a plastoquinone + NADPH + (n+1) H(+)(in) = a plastoquinol + NADP(+) + n H(+)(out)</text>
        <dbReference type="Rhea" id="RHEA:42612"/>
        <dbReference type="Rhea" id="RHEA-COMP:9561"/>
        <dbReference type="Rhea" id="RHEA-COMP:9562"/>
        <dbReference type="ChEBI" id="CHEBI:15378"/>
        <dbReference type="ChEBI" id="CHEBI:17757"/>
        <dbReference type="ChEBI" id="CHEBI:57783"/>
        <dbReference type="ChEBI" id="CHEBI:58349"/>
        <dbReference type="ChEBI" id="CHEBI:62192"/>
    </reaction>
</comment>
<comment type="subunit">
    <text evidence="1">NDH is composed of at least 16 different subunits, 5 of which are encoded in the nucleus.</text>
</comment>
<comment type="subcellular location">
    <subcellularLocation>
        <location evidence="1">Plastid</location>
        <location evidence="1">Chloroplast thylakoid membrane</location>
        <topology evidence="1">Multi-pass membrane protein</topology>
    </subcellularLocation>
</comment>
<comment type="similarity">
    <text evidence="1">Belongs to the complex I subunit 2 family.</text>
</comment>
<evidence type="ECO:0000255" key="1">
    <source>
        <dbReference type="HAMAP-Rule" id="MF_00445"/>
    </source>
</evidence>
<feature type="chain" id="PRO_0000391295" description="NAD(P)H-quinone oxidoreductase subunit 2 B, chloroplastic">
    <location>
        <begin position="1"/>
        <end position="510"/>
    </location>
</feature>
<feature type="transmembrane region" description="Helical" evidence="1">
    <location>
        <begin position="26"/>
        <end position="46"/>
    </location>
</feature>
<feature type="transmembrane region" description="Helical" evidence="1">
    <location>
        <begin position="57"/>
        <end position="77"/>
    </location>
</feature>
<feature type="transmembrane region" description="Helical" evidence="1">
    <location>
        <begin position="99"/>
        <end position="119"/>
    </location>
</feature>
<feature type="transmembrane region" description="Helical" evidence="1">
    <location>
        <begin position="124"/>
        <end position="144"/>
    </location>
</feature>
<feature type="transmembrane region" description="Helical" evidence="1">
    <location>
        <begin position="149"/>
        <end position="169"/>
    </location>
</feature>
<feature type="transmembrane region" description="Helical" evidence="1">
    <location>
        <begin position="183"/>
        <end position="203"/>
    </location>
</feature>
<feature type="transmembrane region" description="Helical" evidence="1">
    <location>
        <begin position="227"/>
        <end position="247"/>
    </location>
</feature>
<feature type="transmembrane region" description="Helical" evidence="1">
    <location>
        <begin position="295"/>
        <end position="315"/>
    </location>
</feature>
<feature type="transmembrane region" description="Helical" evidence="1">
    <location>
        <begin position="323"/>
        <end position="342"/>
    </location>
</feature>
<feature type="transmembrane region" description="Helical" evidence="1">
    <location>
        <begin position="354"/>
        <end position="374"/>
    </location>
</feature>
<feature type="transmembrane region" description="Helical" evidence="1">
    <location>
        <begin position="395"/>
        <end position="415"/>
    </location>
</feature>
<feature type="transmembrane region" description="Helical" evidence="1">
    <location>
        <begin position="418"/>
        <end position="438"/>
    </location>
</feature>
<feature type="transmembrane region" description="Helical" evidence="1">
    <location>
        <begin position="484"/>
        <end position="504"/>
    </location>
</feature>
<accession>P0CD15</accession>
<accession>B0Z5H2</accession>
<name>NU2C2_OENPA</name>
<geneLocation type="chloroplast"/>